<reference key="1">
    <citation type="journal article" date="2004" name="Genome Res.">
        <title>Genome sequence of Haloarcula marismortui: a halophilic archaeon from the Dead Sea.</title>
        <authorList>
            <person name="Baliga N.S."/>
            <person name="Bonneau R."/>
            <person name="Facciotti M.T."/>
            <person name="Pan M."/>
            <person name="Glusman G."/>
            <person name="Deutsch E.W."/>
            <person name="Shannon P."/>
            <person name="Chiu Y."/>
            <person name="Weng R.S."/>
            <person name="Gan R.R."/>
            <person name="Hung P."/>
            <person name="Date S.V."/>
            <person name="Marcotte E."/>
            <person name="Hood L."/>
            <person name="Ng W.V."/>
        </authorList>
    </citation>
    <scope>NUCLEOTIDE SEQUENCE [LARGE SCALE GENOMIC DNA]</scope>
    <source>
        <strain>ATCC 43049 / DSM 3752 / JCM 8966 / VKM B-1809</strain>
    </source>
</reference>
<protein>
    <recommendedName>
        <fullName evidence="1">Imidazoleglycerol-phosphate dehydratase</fullName>
        <shortName evidence="1">IGPD</shortName>
        <ecNumber evidence="1">4.2.1.19</ecNumber>
    </recommendedName>
</protein>
<comment type="catalytic activity">
    <reaction evidence="1">
        <text>D-erythro-1-(imidazol-4-yl)glycerol 3-phosphate = 3-(imidazol-4-yl)-2-oxopropyl phosphate + H2O</text>
        <dbReference type="Rhea" id="RHEA:11040"/>
        <dbReference type="ChEBI" id="CHEBI:15377"/>
        <dbReference type="ChEBI" id="CHEBI:57766"/>
        <dbReference type="ChEBI" id="CHEBI:58278"/>
        <dbReference type="EC" id="4.2.1.19"/>
    </reaction>
</comment>
<comment type="pathway">
    <text evidence="1">Amino-acid biosynthesis; L-histidine biosynthesis; L-histidine from 5-phospho-alpha-D-ribose 1-diphosphate: step 6/9.</text>
</comment>
<comment type="subcellular location">
    <subcellularLocation>
        <location evidence="1">Cytoplasm</location>
    </subcellularLocation>
</comment>
<comment type="similarity">
    <text evidence="1">Belongs to the imidazoleglycerol-phosphate dehydratase family.</text>
</comment>
<accession>Q5UZF0</accession>
<gene>
    <name evidence="1" type="primary">hisB</name>
    <name type="ordered locus">rrnAC2555</name>
</gene>
<dbReference type="EC" id="4.2.1.19" evidence="1"/>
<dbReference type="EMBL" id="AY596297">
    <property type="protein sequence ID" value="AAV47353.1"/>
    <property type="molecule type" value="Genomic_DNA"/>
</dbReference>
<dbReference type="RefSeq" id="WP_004959567.1">
    <property type="nucleotide sequence ID" value="NZ_CP039138.1"/>
</dbReference>
<dbReference type="SMR" id="Q5UZF0"/>
<dbReference type="STRING" id="272569.rrnAC2555"/>
<dbReference type="PaxDb" id="272569-rrnAC2555"/>
<dbReference type="EnsemblBacteria" id="AAV47353">
    <property type="protein sequence ID" value="AAV47353"/>
    <property type="gene ID" value="rrnAC2555"/>
</dbReference>
<dbReference type="GeneID" id="64824159"/>
<dbReference type="KEGG" id="hma:rrnAC2555"/>
<dbReference type="PATRIC" id="fig|272569.17.peg.3160"/>
<dbReference type="eggNOG" id="arCOG04398">
    <property type="taxonomic scope" value="Archaea"/>
</dbReference>
<dbReference type="HOGENOM" id="CLU_044308_3_0_2"/>
<dbReference type="UniPathway" id="UPA00031">
    <property type="reaction ID" value="UER00011"/>
</dbReference>
<dbReference type="Proteomes" id="UP000001169">
    <property type="component" value="Chromosome I"/>
</dbReference>
<dbReference type="GO" id="GO:0005737">
    <property type="term" value="C:cytoplasm"/>
    <property type="evidence" value="ECO:0007669"/>
    <property type="project" value="UniProtKB-SubCell"/>
</dbReference>
<dbReference type="GO" id="GO:0004424">
    <property type="term" value="F:imidazoleglycerol-phosphate dehydratase activity"/>
    <property type="evidence" value="ECO:0007669"/>
    <property type="project" value="UniProtKB-UniRule"/>
</dbReference>
<dbReference type="GO" id="GO:0000105">
    <property type="term" value="P:L-histidine biosynthetic process"/>
    <property type="evidence" value="ECO:0007669"/>
    <property type="project" value="UniProtKB-UniRule"/>
</dbReference>
<dbReference type="CDD" id="cd07914">
    <property type="entry name" value="IGPD"/>
    <property type="match status" value="1"/>
</dbReference>
<dbReference type="FunFam" id="3.30.230.40:FF:000001">
    <property type="entry name" value="Imidazoleglycerol-phosphate dehydratase HisB"/>
    <property type="match status" value="1"/>
</dbReference>
<dbReference type="FunFam" id="3.30.230.40:FF:000003">
    <property type="entry name" value="Imidazoleglycerol-phosphate dehydratase HisB"/>
    <property type="match status" value="1"/>
</dbReference>
<dbReference type="Gene3D" id="3.30.230.40">
    <property type="entry name" value="Imidazole glycerol phosphate dehydratase, domain 1"/>
    <property type="match status" value="2"/>
</dbReference>
<dbReference type="HAMAP" id="MF_00076">
    <property type="entry name" value="HisB"/>
    <property type="match status" value="1"/>
</dbReference>
<dbReference type="InterPro" id="IPR038494">
    <property type="entry name" value="IGPD_sf"/>
</dbReference>
<dbReference type="InterPro" id="IPR000807">
    <property type="entry name" value="ImidazoleglycerolP_deHydtase"/>
</dbReference>
<dbReference type="InterPro" id="IPR020565">
    <property type="entry name" value="ImidazoleglycerP_deHydtase_CS"/>
</dbReference>
<dbReference type="InterPro" id="IPR020568">
    <property type="entry name" value="Ribosomal_Su5_D2-typ_SF"/>
</dbReference>
<dbReference type="NCBIfam" id="NF002111">
    <property type="entry name" value="PRK00951.2-1"/>
    <property type="match status" value="1"/>
</dbReference>
<dbReference type="NCBIfam" id="NF002114">
    <property type="entry name" value="PRK00951.2-4"/>
    <property type="match status" value="1"/>
</dbReference>
<dbReference type="NCBIfam" id="NF002116">
    <property type="entry name" value="PRK00951.2-6"/>
    <property type="match status" value="1"/>
</dbReference>
<dbReference type="PANTHER" id="PTHR23133:SF2">
    <property type="entry name" value="IMIDAZOLEGLYCEROL-PHOSPHATE DEHYDRATASE"/>
    <property type="match status" value="1"/>
</dbReference>
<dbReference type="PANTHER" id="PTHR23133">
    <property type="entry name" value="IMIDAZOLEGLYCEROL-PHOSPHATE DEHYDRATASE HIS7"/>
    <property type="match status" value="1"/>
</dbReference>
<dbReference type="Pfam" id="PF00475">
    <property type="entry name" value="IGPD"/>
    <property type="match status" value="1"/>
</dbReference>
<dbReference type="SUPFAM" id="SSF54211">
    <property type="entry name" value="Ribosomal protein S5 domain 2-like"/>
    <property type="match status" value="2"/>
</dbReference>
<dbReference type="PROSITE" id="PS00954">
    <property type="entry name" value="IGP_DEHYDRATASE_1"/>
    <property type="match status" value="1"/>
</dbReference>
<dbReference type="PROSITE" id="PS00955">
    <property type="entry name" value="IGP_DEHYDRATASE_2"/>
    <property type="match status" value="1"/>
</dbReference>
<feature type="chain" id="PRO_0000158186" description="Imidazoleglycerol-phosphate dehydratase">
    <location>
        <begin position="1"/>
        <end position="195"/>
    </location>
</feature>
<evidence type="ECO:0000255" key="1">
    <source>
        <dbReference type="HAMAP-Rule" id="MF_00076"/>
    </source>
</evidence>
<name>HIS7_HALMA</name>
<keyword id="KW-0028">Amino-acid biosynthesis</keyword>
<keyword id="KW-0963">Cytoplasm</keyword>
<keyword id="KW-0368">Histidine biosynthesis</keyword>
<keyword id="KW-0456">Lyase</keyword>
<keyword id="KW-1185">Reference proteome</keyword>
<proteinExistence type="inferred from homology"/>
<organism>
    <name type="scientific">Haloarcula marismortui (strain ATCC 43049 / DSM 3752 / JCM 8966 / VKM B-1809)</name>
    <name type="common">Halobacterium marismortui</name>
    <dbReference type="NCBI Taxonomy" id="272569"/>
    <lineage>
        <taxon>Archaea</taxon>
        <taxon>Methanobacteriati</taxon>
        <taxon>Methanobacteriota</taxon>
        <taxon>Stenosarchaea group</taxon>
        <taxon>Halobacteria</taxon>
        <taxon>Halobacteriales</taxon>
        <taxon>Haloarculaceae</taxon>
        <taxon>Haloarcula</taxon>
    </lineage>
</organism>
<sequence length="195" mass="21243">MTDRTAAVTRTTAETDIEVTLDVDGDGDSTIDTGIGFFDHMLDSFSTHGLFDLTVQCDGDLDIDDHHTVEDVAITLGEAFTEALDDKRGIRRFADRKVPLDEAVASVVVDISGRPYFEFDGEFSQASVGGMTSHMAKHFCRSLSMNAGLTLHCGVDGENAHHEIEALFKSLARSLDDATRIDERRSDVASTKGEL</sequence>